<keyword id="KW-0067">ATP-binding</keyword>
<keyword id="KW-0436">Ligase</keyword>
<keyword id="KW-0460">Magnesium</keyword>
<keyword id="KW-0479">Metal-binding</keyword>
<keyword id="KW-0547">Nucleotide-binding</keyword>
<keyword id="KW-0816">Tricarboxylic acid cycle</keyword>
<evidence type="ECO:0000255" key="1">
    <source>
        <dbReference type="HAMAP-Rule" id="MF_00558"/>
    </source>
</evidence>
<gene>
    <name evidence="1" type="primary">sucC</name>
    <name type="ordered locus">Caul_0229</name>
</gene>
<comment type="function">
    <text evidence="1">Succinyl-CoA synthetase functions in the citric acid cycle (TCA), coupling the hydrolysis of succinyl-CoA to the synthesis of either ATP or GTP and thus represents the only step of substrate-level phosphorylation in the TCA. The beta subunit provides nucleotide specificity of the enzyme and binds the substrate succinate, while the binding sites for coenzyme A and phosphate are found in the alpha subunit.</text>
</comment>
<comment type="catalytic activity">
    <reaction evidence="1">
        <text>succinate + ATP + CoA = succinyl-CoA + ADP + phosphate</text>
        <dbReference type="Rhea" id="RHEA:17661"/>
        <dbReference type="ChEBI" id="CHEBI:30031"/>
        <dbReference type="ChEBI" id="CHEBI:30616"/>
        <dbReference type="ChEBI" id="CHEBI:43474"/>
        <dbReference type="ChEBI" id="CHEBI:57287"/>
        <dbReference type="ChEBI" id="CHEBI:57292"/>
        <dbReference type="ChEBI" id="CHEBI:456216"/>
        <dbReference type="EC" id="6.2.1.5"/>
    </reaction>
    <physiologicalReaction direction="right-to-left" evidence="1">
        <dbReference type="Rhea" id="RHEA:17663"/>
    </physiologicalReaction>
</comment>
<comment type="catalytic activity">
    <reaction evidence="1">
        <text>GTP + succinate + CoA = succinyl-CoA + GDP + phosphate</text>
        <dbReference type="Rhea" id="RHEA:22120"/>
        <dbReference type="ChEBI" id="CHEBI:30031"/>
        <dbReference type="ChEBI" id="CHEBI:37565"/>
        <dbReference type="ChEBI" id="CHEBI:43474"/>
        <dbReference type="ChEBI" id="CHEBI:57287"/>
        <dbReference type="ChEBI" id="CHEBI:57292"/>
        <dbReference type="ChEBI" id="CHEBI:58189"/>
    </reaction>
    <physiologicalReaction direction="right-to-left" evidence="1">
        <dbReference type="Rhea" id="RHEA:22122"/>
    </physiologicalReaction>
</comment>
<comment type="cofactor">
    <cofactor evidence="1">
        <name>Mg(2+)</name>
        <dbReference type="ChEBI" id="CHEBI:18420"/>
    </cofactor>
    <text evidence="1">Binds 1 Mg(2+) ion per subunit.</text>
</comment>
<comment type="pathway">
    <text evidence="1">Carbohydrate metabolism; tricarboxylic acid cycle; succinate from succinyl-CoA (ligase route): step 1/1.</text>
</comment>
<comment type="subunit">
    <text evidence="1">Heterotetramer of two alpha and two beta subunits.</text>
</comment>
<comment type="similarity">
    <text evidence="1">Belongs to the succinate/malate CoA ligase beta subunit family.</text>
</comment>
<organism>
    <name type="scientific">Caulobacter sp. (strain K31)</name>
    <dbReference type="NCBI Taxonomy" id="366602"/>
    <lineage>
        <taxon>Bacteria</taxon>
        <taxon>Pseudomonadati</taxon>
        <taxon>Pseudomonadota</taxon>
        <taxon>Alphaproteobacteria</taxon>
        <taxon>Caulobacterales</taxon>
        <taxon>Caulobacteraceae</taxon>
        <taxon>Caulobacter</taxon>
    </lineage>
</organism>
<name>SUCC_CAUSK</name>
<accession>B0T3D1</accession>
<protein>
    <recommendedName>
        <fullName evidence="1">Succinate--CoA ligase [ADP-forming] subunit beta</fullName>
        <ecNumber evidence="1">6.2.1.5</ecNumber>
    </recommendedName>
    <alternativeName>
        <fullName evidence="1">Succinyl-CoA synthetase subunit beta</fullName>
        <shortName evidence="1">SCS-beta</shortName>
    </alternativeName>
</protein>
<proteinExistence type="inferred from homology"/>
<dbReference type="EC" id="6.2.1.5" evidence="1"/>
<dbReference type="EMBL" id="CP000927">
    <property type="protein sequence ID" value="ABZ69366.1"/>
    <property type="molecule type" value="Genomic_DNA"/>
</dbReference>
<dbReference type="SMR" id="B0T3D1"/>
<dbReference type="STRING" id="366602.Caul_0229"/>
<dbReference type="KEGG" id="cak:Caul_0229"/>
<dbReference type="eggNOG" id="COG0045">
    <property type="taxonomic scope" value="Bacteria"/>
</dbReference>
<dbReference type="HOGENOM" id="CLU_037430_0_2_5"/>
<dbReference type="OrthoDB" id="9802602at2"/>
<dbReference type="UniPathway" id="UPA00223">
    <property type="reaction ID" value="UER00999"/>
</dbReference>
<dbReference type="GO" id="GO:0005829">
    <property type="term" value="C:cytosol"/>
    <property type="evidence" value="ECO:0007669"/>
    <property type="project" value="TreeGrafter"/>
</dbReference>
<dbReference type="GO" id="GO:0042709">
    <property type="term" value="C:succinate-CoA ligase complex"/>
    <property type="evidence" value="ECO:0007669"/>
    <property type="project" value="TreeGrafter"/>
</dbReference>
<dbReference type="GO" id="GO:0005524">
    <property type="term" value="F:ATP binding"/>
    <property type="evidence" value="ECO:0007669"/>
    <property type="project" value="UniProtKB-UniRule"/>
</dbReference>
<dbReference type="GO" id="GO:0000287">
    <property type="term" value="F:magnesium ion binding"/>
    <property type="evidence" value="ECO:0007669"/>
    <property type="project" value="UniProtKB-UniRule"/>
</dbReference>
<dbReference type="GO" id="GO:0004775">
    <property type="term" value="F:succinate-CoA ligase (ADP-forming) activity"/>
    <property type="evidence" value="ECO:0007669"/>
    <property type="project" value="UniProtKB-UniRule"/>
</dbReference>
<dbReference type="GO" id="GO:0004776">
    <property type="term" value="F:succinate-CoA ligase (GDP-forming) activity"/>
    <property type="evidence" value="ECO:0007669"/>
    <property type="project" value="RHEA"/>
</dbReference>
<dbReference type="GO" id="GO:0006104">
    <property type="term" value="P:succinyl-CoA metabolic process"/>
    <property type="evidence" value="ECO:0007669"/>
    <property type="project" value="TreeGrafter"/>
</dbReference>
<dbReference type="GO" id="GO:0006099">
    <property type="term" value="P:tricarboxylic acid cycle"/>
    <property type="evidence" value="ECO:0007669"/>
    <property type="project" value="UniProtKB-UniRule"/>
</dbReference>
<dbReference type="FunFam" id="3.30.1490.20:FF:000002">
    <property type="entry name" value="Succinate--CoA ligase [ADP-forming] subunit beta"/>
    <property type="match status" value="1"/>
</dbReference>
<dbReference type="FunFam" id="3.30.470.20:FF:000002">
    <property type="entry name" value="Succinate--CoA ligase [ADP-forming] subunit beta"/>
    <property type="match status" value="1"/>
</dbReference>
<dbReference type="FunFam" id="3.40.50.261:FF:000001">
    <property type="entry name" value="Succinate--CoA ligase [ADP-forming] subunit beta"/>
    <property type="match status" value="1"/>
</dbReference>
<dbReference type="Gene3D" id="3.30.1490.20">
    <property type="entry name" value="ATP-grasp fold, A domain"/>
    <property type="match status" value="1"/>
</dbReference>
<dbReference type="Gene3D" id="3.30.470.20">
    <property type="entry name" value="ATP-grasp fold, B domain"/>
    <property type="match status" value="1"/>
</dbReference>
<dbReference type="Gene3D" id="3.40.50.261">
    <property type="entry name" value="Succinyl-CoA synthetase domains"/>
    <property type="match status" value="1"/>
</dbReference>
<dbReference type="HAMAP" id="MF_00558">
    <property type="entry name" value="Succ_CoA_beta"/>
    <property type="match status" value="1"/>
</dbReference>
<dbReference type="InterPro" id="IPR011761">
    <property type="entry name" value="ATP-grasp"/>
</dbReference>
<dbReference type="InterPro" id="IPR013650">
    <property type="entry name" value="ATP-grasp_succ-CoA_synth-type"/>
</dbReference>
<dbReference type="InterPro" id="IPR013815">
    <property type="entry name" value="ATP_grasp_subdomain_1"/>
</dbReference>
<dbReference type="InterPro" id="IPR017866">
    <property type="entry name" value="Succ-CoA_synthase_bsu_CS"/>
</dbReference>
<dbReference type="InterPro" id="IPR005811">
    <property type="entry name" value="SUCC_ACL_C"/>
</dbReference>
<dbReference type="InterPro" id="IPR005809">
    <property type="entry name" value="Succ_CoA_ligase-like_bsu"/>
</dbReference>
<dbReference type="InterPro" id="IPR016102">
    <property type="entry name" value="Succinyl-CoA_synth-like"/>
</dbReference>
<dbReference type="NCBIfam" id="NF001913">
    <property type="entry name" value="PRK00696.1"/>
    <property type="match status" value="1"/>
</dbReference>
<dbReference type="NCBIfam" id="TIGR01016">
    <property type="entry name" value="sucCoAbeta"/>
    <property type="match status" value="1"/>
</dbReference>
<dbReference type="PANTHER" id="PTHR11815:SF10">
    <property type="entry name" value="SUCCINATE--COA LIGASE [GDP-FORMING] SUBUNIT BETA, MITOCHONDRIAL"/>
    <property type="match status" value="1"/>
</dbReference>
<dbReference type="PANTHER" id="PTHR11815">
    <property type="entry name" value="SUCCINYL-COA SYNTHETASE BETA CHAIN"/>
    <property type="match status" value="1"/>
</dbReference>
<dbReference type="Pfam" id="PF08442">
    <property type="entry name" value="ATP-grasp_2"/>
    <property type="match status" value="1"/>
</dbReference>
<dbReference type="Pfam" id="PF00549">
    <property type="entry name" value="Ligase_CoA"/>
    <property type="match status" value="1"/>
</dbReference>
<dbReference type="PIRSF" id="PIRSF001554">
    <property type="entry name" value="SucCS_beta"/>
    <property type="match status" value="1"/>
</dbReference>
<dbReference type="SUPFAM" id="SSF56059">
    <property type="entry name" value="Glutathione synthetase ATP-binding domain-like"/>
    <property type="match status" value="1"/>
</dbReference>
<dbReference type="SUPFAM" id="SSF52210">
    <property type="entry name" value="Succinyl-CoA synthetase domains"/>
    <property type="match status" value="1"/>
</dbReference>
<dbReference type="PROSITE" id="PS50975">
    <property type="entry name" value="ATP_GRASP"/>
    <property type="match status" value="1"/>
</dbReference>
<dbReference type="PROSITE" id="PS01217">
    <property type="entry name" value="SUCCINYL_COA_LIG_3"/>
    <property type="match status" value="1"/>
</dbReference>
<sequence length="399" mass="42026">MNIHEHQAKAVLAEFGAPVPRGYPAFTVEEAVAAAEKLGGPVFVVKSQIHAGGRGKGKFKGLGPDAKGGVRVVKSVEDVKTNAAEMLGRVLVTHQTGPKGKQVNRLYVEEGAAIAKEFYLSLLVDRETSMVSVVASTEGGMDIEDVAHATPEKIHSFSIDPATGVWPTHARALAKALGLTGGLAKEAATLLGQLYTAFLAKDMAMLEINPLIVTEDDHLKVLDAKLSFDGNALYRHPDIRALRDESEEDPKEIEASKYDLAYIALDGEIGCMVNGAGLAMATMDIIKLYGAEPANFLDVGGGASKEKVTAAFKIITADPAVKGILVNIFGGIMRCDIIAEGVIAAVKEVGLQVPLVVRLEGTNVELGKKIIRESGLNVIAANDLSDGAEKIVKAVKGAA</sequence>
<feature type="chain" id="PRO_1000082057" description="Succinate--CoA ligase [ADP-forming] subunit beta">
    <location>
        <begin position="1"/>
        <end position="399"/>
    </location>
</feature>
<feature type="domain" description="ATP-grasp" evidence="1">
    <location>
        <begin position="9"/>
        <end position="254"/>
    </location>
</feature>
<feature type="binding site" evidence="1">
    <location>
        <position position="46"/>
    </location>
    <ligand>
        <name>ATP</name>
        <dbReference type="ChEBI" id="CHEBI:30616"/>
    </ligand>
</feature>
<feature type="binding site" evidence="1">
    <location>
        <begin position="53"/>
        <end position="55"/>
    </location>
    <ligand>
        <name>ATP</name>
        <dbReference type="ChEBI" id="CHEBI:30616"/>
    </ligand>
</feature>
<feature type="binding site" evidence="1">
    <location>
        <position position="109"/>
    </location>
    <ligand>
        <name>ATP</name>
        <dbReference type="ChEBI" id="CHEBI:30616"/>
    </ligand>
</feature>
<feature type="binding site" evidence="1">
    <location>
        <position position="112"/>
    </location>
    <ligand>
        <name>ATP</name>
        <dbReference type="ChEBI" id="CHEBI:30616"/>
    </ligand>
</feature>
<feature type="binding site" evidence="1">
    <location>
        <position position="117"/>
    </location>
    <ligand>
        <name>ATP</name>
        <dbReference type="ChEBI" id="CHEBI:30616"/>
    </ligand>
</feature>
<feature type="binding site" evidence="1">
    <location>
        <position position="209"/>
    </location>
    <ligand>
        <name>Mg(2+)</name>
        <dbReference type="ChEBI" id="CHEBI:18420"/>
    </ligand>
</feature>
<feature type="binding site" evidence="1">
    <location>
        <position position="223"/>
    </location>
    <ligand>
        <name>Mg(2+)</name>
        <dbReference type="ChEBI" id="CHEBI:18420"/>
    </ligand>
</feature>
<feature type="binding site" evidence="1">
    <location>
        <position position="274"/>
    </location>
    <ligand>
        <name>substrate</name>
        <note>ligand shared with subunit alpha</note>
    </ligand>
</feature>
<feature type="binding site" evidence="1">
    <location>
        <begin position="331"/>
        <end position="333"/>
    </location>
    <ligand>
        <name>substrate</name>
        <note>ligand shared with subunit alpha</note>
    </ligand>
</feature>
<reference key="1">
    <citation type="submission" date="2008-01" db="EMBL/GenBank/DDBJ databases">
        <title>Complete sequence of chromosome of Caulobacter sp. K31.</title>
        <authorList>
            <consortium name="US DOE Joint Genome Institute"/>
            <person name="Copeland A."/>
            <person name="Lucas S."/>
            <person name="Lapidus A."/>
            <person name="Barry K."/>
            <person name="Glavina del Rio T."/>
            <person name="Dalin E."/>
            <person name="Tice H."/>
            <person name="Pitluck S."/>
            <person name="Bruce D."/>
            <person name="Goodwin L."/>
            <person name="Thompson L.S."/>
            <person name="Brettin T."/>
            <person name="Detter J.C."/>
            <person name="Han C."/>
            <person name="Schmutz J."/>
            <person name="Larimer F."/>
            <person name="Land M."/>
            <person name="Hauser L."/>
            <person name="Kyrpides N."/>
            <person name="Kim E."/>
            <person name="Stephens C."/>
            <person name="Richardson P."/>
        </authorList>
    </citation>
    <scope>NUCLEOTIDE SEQUENCE [LARGE SCALE GENOMIC DNA]</scope>
    <source>
        <strain>K31</strain>
    </source>
</reference>